<comment type="function">
    <text evidence="1">Catalyzes both the ATP-dependent activation of exogenously supplied lipoate to lipoyl-AMP and the transfer of the activated lipoyl onto the lipoyl domains of lipoate-dependent enzymes.</text>
</comment>
<comment type="catalytic activity">
    <reaction>
        <text>L-lysyl-[lipoyl-carrier protein] + (R)-lipoate + ATP = N(6)-[(R)-lipoyl]-L-lysyl-[lipoyl-carrier protein] + AMP + diphosphate + H(+)</text>
        <dbReference type="Rhea" id="RHEA:49288"/>
        <dbReference type="Rhea" id="RHEA-COMP:10500"/>
        <dbReference type="Rhea" id="RHEA-COMP:10502"/>
        <dbReference type="ChEBI" id="CHEBI:15378"/>
        <dbReference type="ChEBI" id="CHEBI:29969"/>
        <dbReference type="ChEBI" id="CHEBI:30616"/>
        <dbReference type="ChEBI" id="CHEBI:33019"/>
        <dbReference type="ChEBI" id="CHEBI:83088"/>
        <dbReference type="ChEBI" id="CHEBI:83099"/>
        <dbReference type="ChEBI" id="CHEBI:456215"/>
        <dbReference type="EC" id="6.3.1.20"/>
    </reaction>
</comment>
<comment type="pathway">
    <text>Protein modification; protein lipoylation via exogenous pathway; protein N(6)-(lipoyl)lysine from lipoate: step 1/2.</text>
</comment>
<comment type="pathway">
    <text>Protein modification; protein lipoylation via exogenous pathway; protein N(6)-(lipoyl)lysine from lipoate: step 2/2.</text>
</comment>
<comment type="subunit">
    <text evidence="1">Monomer.</text>
</comment>
<comment type="miscellaneous">
    <text evidence="1">In the transfer reaction, the free carboxyl group of lipoic acid is attached via an amide linkage to the epsilon-amino group of a specific lysine residue of lipoyl domains of lipoate-dependent enzymes.</text>
</comment>
<comment type="similarity">
    <text evidence="3">Belongs to the LplA family.</text>
</comment>
<gene>
    <name type="primary">AIM22</name>
    <name type="ORF">SCRG_03625</name>
</gene>
<name>LPLA_YEAS1</name>
<accession>B3LQ66</accession>
<reference key="1">
    <citation type="submission" date="2005-03" db="EMBL/GenBank/DDBJ databases">
        <title>Annotation of the Saccharomyces cerevisiae RM11-1a genome.</title>
        <authorList>
            <consortium name="The Broad Institute Genome Sequencing Platform"/>
            <person name="Birren B.W."/>
            <person name="Lander E.S."/>
            <person name="Galagan J.E."/>
            <person name="Nusbaum C."/>
            <person name="Devon K."/>
            <person name="Cuomo C."/>
            <person name="Jaffe D.B."/>
            <person name="Butler J."/>
            <person name="Alvarez P."/>
            <person name="Gnerre S."/>
            <person name="Grabherr M."/>
            <person name="Kleber M."/>
            <person name="Mauceli E.W."/>
            <person name="Brockman W."/>
            <person name="MacCallum I.A."/>
            <person name="Rounsley S."/>
            <person name="Young S.K."/>
            <person name="LaButti K."/>
            <person name="Pushparaj V."/>
            <person name="DeCaprio D."/>
            <person name="Crawford M."/>
            <person name="Koehrsen M."/>
            <person name="Engels R."/>
            <person name="Montgomery P."/>
            <person name="Pearson M."/>
            <person name="Howarth C."/>
            <person name="Larson L."/>
            <person name="Luoma S."/>
            <person name="White J."/>
            <person name="O'Leary S."/>
            <person name="Kodira C.D."/>
            <person name="Zeng Q."/>
            <person name="Yandava C."/>
            <person name="Alvarado L."/>
            <person name="Pratt S."/>
            <person name="Kruglyak L."/>
        </authorList>
    </citation>
    <scope>NUCLEOTIDE SEQUENCE [LARGE SCALE GENOMIC DNA]</scope>
    <source>
        <strain>RM11-1a</strain>
    </source>
</reference>
<dbReference type="EC" id="6.3.1.20"/>
<dbReference type="EMBL" id="CH408050">
    <property type="protein sequence ID" value="EDV12719.1"/>
    <property type="molecule type" value="Genomic_DNA"/>
</dbReference>
<dbReference type="SMR" id="B3LQ66"/>
<dbReference type="HOGENOM" id="CLU_022986_2_0_1"/>
<dbReference type="OrthoDB" id="34795at4893"/>
<dbReference type="UniPathway" id="UPA00537">
    <property type="reaction ID" value="UER00594"/>
</dbReference>
<dbReference type="UniPathway" id="UPA00537">
    <property type="reaction ID" value="UER00595"/>
</dbReference>
<dbReference type="Proteomes" id="UP000008335">
    <property type="component" value="Unassembled WGS sequence"/>
</dbReference>
<dbReference type="GO" id="GO:0005739">
    <property type="term" value="C:mitochondrion"/>
    <property type="evidence" value="ECO:0007669"/>
    <property type="project" value="TreeGrafter"/>
</dbReference>
<dbReference type="GO" id="GO:0005524">
    <property type="term" value="F:ATP binding"/>
    <property type="evidence" value="ECO:0007669"/>
    <property type="project" value="UniProtKB-KW"/>
</dbReference>
<dbReference type="GO" id="GO:0016979">
    <property type="term" value="F:lipoate-protein ligase activity"/>
    <property type="evidence" value="ECO:0007669"/>
    <property type="project" value="UniProtKB-EC"/>
</dbReference>
<dbReference type="GO" id="GO:0017118">
    <property type="term" value="F:lipoyltransferase activity"/>
    <property type="evidence" value="ECO:0007669"/>
    <property type="project" value="TreeGrafter"/>
</dbReference>
<dbReference type="GO" id="GO:0036211">
    <property type="term" value="P:protein modification process"/>
    <property type="evidence" value="ECO:0007669"/>
    <property type="project" value="InterPro"/>
</dbReference>
<dbReference type="CDD" id="cd16443">
    <property type="entry name" value="LplA"/>
    <property type="match status" value="1"/>
</dbReference>
<dbReference type="FunFam" id="3.30.930.10:FF:000107">
    <property type="entry name" value="Putative lipoate-protein ligase A"/>
    <property type="match status" value="1"/>
</dbReference>
<dbReference type="Gene3D" id="3.30.930.10">
    <property type="entry name" value="Bira Bifunctional Protein, Domain 2"/>
    <property type="match status" value="1"/>
</dbReference>
<dbReference type="InterPro" id="IPR045864">
    <property type="entry name" value="aa-tRNA-synth_II/BPL/LPL"/>
</dbReference>
<dbReference type="InterPro" id="IPR004143">
    <property type="entry name" value="BPL_LPL_catalytic"/>
</dbReference>
<dbReference type="InterPro" id="IPR004562">
    <property type="entry name" value="LipoylTrfase_LipoateP_Ligase"/>
</dbReference>
<dbReference type="NCBIfam" id="TIGR00545">
    <property type="entry name" value="lipoyltrans"/>
    <property type="match status" value="1"/>
</dbReference>
<dbReference type="PANTHER" id="PTHR12561">
    <property type="entry name" value="LIPOATE-PROTEIN LIGASE"/>
    <property type="match status" value="1"/>
</dbReference>
<dbReference type="PANTHER" id="PTHR12561:SF3">
    <property type="entry name" value="LIPOYLTRANSFERASE 1, MITOCHONDRIAL"/>
    <property type="match status" value="1"/>
</dbReference>
<dbReference type="Pfam" id="PF21948">
    <property type="entry name" value="LplA-B_cat"/>
    <property type="match status" value="1"/>
</dbReference>
<dbReference type="SUPFAM" id="SSF55681">
    <property type="entry name" value="Class II aaRS and biotin synthetases"/>
    <property type="match status" value="1"/>
</dbReference>
<dbReference type="PROSITE" id="PS51733">
    <property type="entry name" value="BPL_LPL_CATALYTIC"/>
    <property type="match status" value="1"/>
</dbReference>
<keyword id="KW-0067">ATP-binding</keyword>
<keyword id="KW-0436">Ligase</keyword>
<keyword id="KW-0547">Nucleotide-binding</keyword>
<evidence type="ECO:0000250" key="1"/>
<evidence type="ECO:0000255" key="2">
    <source>
        <dbReference type="PROSITE-ProRule" id="PRU01067"/>
    </source>
</evidence>
<evidence type="ECO:0000305" key="3"/>
<proteinExistence type="inferred from homology"/>
<feature type="chain" id="PRO_0000377668" description="Putative lipoate-protein ligase A">
    <location>
        <begin position="1"/>
        <end position="409"/>
    </location>
</feature>
<feature type="domain" description="BPL/LPL catalytic" evidence="2">
    <location>
        <begin position="146"/>
        <end position="330"/>
    </location>
</feature>
<feature type="binding site" evidence="1">
    <location>
        <position position="188"/>
    </location>
    <ligand>
        <name>ATP</name>
        <dbReference type="ChEBI" id="CHEBI:30616"/>
    </ligand>
</feature>
<feature type="binding site" evidence="1">
    <location>
        <begin position="193"/>
        <end position="196"/>
    </location>
    <ligand>
        <name>ATP</name>
        <dbReference type="ChEBI" id="CHEBI:30616"/>
    </ligand>
</feature>
<feature type="binding site" evidence="1">
    <location>
        <position position="249"/>
    </location>
    <ligand>
        <name>(R)-lipoate</name>
        <dbReference type="ChEBI" id="CHEBI:83088"/>
    </ligand>
</feature>
<feature type="binding site" evidence="1">
    <location>
        <position position="249"/>
    </location>
    <ligand>
        <name>ATP</name>
        <dbReference type="ChEBI" id="CHEBI:30616"/>
    </ligand>
</feature>
<sequence>MSMMLSNWALSPRYVGQRNLIHCTTLFHTLTRWAKDADDKYHDINSMYENMFTPSNDNVSILQDEGKSDYDTTKTSSMQEDISAFNKDLYNFYNIGYAKQIMSASQLENIVKAKGRFVIQSLSTSPYYNLALENYVFKNTPRAKRGPDNCRLLFYINDRCAVIGKNQNLWQEVDLAKLKSKNFELLRRFSGGGTVLHDLGNVNYSYLTSREKFETKFFNKMIIKWLNSLNPELRLDLNERGDIIQDGFKISGSAYKIAGGKAYHHATMLLNADLEQFSGLLEPSLPNNMEWESSGVHSVKSKIKNVGIITPNQFIAVVSERFQKTFKVDGEIPIYYCDEFKSINDEIKDAMNTLQSEQWKYFSGPKFSVKIKDKGLTIKVEKGMIYDCDRNDLIGLEFKGFLENIDSYT</sequence>
<protein>
    <recommendedName>
        <fullName>Putative lipoate-protein ligase A</fullName>
        <ecNumber>6.3.1.20</ecNumber>
    </recommendedName>
    <alternativeName>
        <fullName>Altered inheritance rate of mitochondria protein 22</fullName>
    </alternativeName>
</protein>
<organism>
    <name type="scientific">Saccharomyces cerevisiae (strain RM11-1a)</name>
    <name type="common">Baker's yeast</name>
    <dbReference type="NCBI Taxonomy" id="285006"/>
    <lineage>
        <taxon>Eukaryota</taxon>
        <taxon>Fungi</taxon>
        <taxon>Dikarya</taxon>
        <taxon>Ascomycota</taxon>
        <taxon>Saccharomycotina</taxon>
        <taxon>Saccharomycetes</taxon>
        <taxon>Saccharomycetales</taxon>
        <taxon>Saccharomycetaceae</taxon>
        <taxon>Saccharomyces</taxon>
    </lineage>
</organism>